<gene>
    <name type="primary">yciF</name>
    <name type="ordered locus">b1258</name>
    <name type="ordered locus">JW1250</name>
</gene>
<dbReference type="EMBL" id="X13583">
    <property type="protein sequence ID" value="CAA31920.1"/>
    <property type="molecule type" value="Genomic_DNA"/>
</dbReference>
<dbReference type="EMBL" id="U25417">
    <property type="protein sequence ID" value="AAA73793.1"/>
    <property type="molecule type" value="Genomic_DNA"/>
</dbReference>
<dbReference type="EMBL" id="U25419">
    <property type="protein sequence ID" value="AAA73805.1"/>
    <property type="molecule type" value="Genomic_DNA"/>
</dbReference>
<dbReference type="EMBL" id="U25420">
    <property type="protein sequence ID" value="AAA73811.1"/>
    <property type="molecule type" value="Genomic_DNA"/>
</dbReference>
<dbReference type="EMBL" id="U25421">
    <property type="protein sequence ID" value="AAA73817.1"/>
    <property type="molecule type" value="Genomic_DNA"/>
</dbReference>
<dbReference type="EMBL" id="U25423">
    <property type="protein sequence ID" value="AAA73829.1"/>
    <property type="molecule type" value="Genomic_DNA"/>
</dbReference>
<dbReference type="EMBL" id="U25427">
    <property type="protein sequence ID" value="AAA73847.1"/>
    <property type="molecule type" value="Genomic_DNA"/>
</dbReference>
<dbReference type="EMBL" id="U23489">
    <property type="protein sequence ID" value="AAB60037.1"/>
    <property type="molecule type" value="Genomic_DNA"/>
</dbReference>
<dbReference type="EMBL" id="U23490">
    <property type="protein sequence ID" value="AAA65142.1"/>
    <property type="molecule type" value="Genomic_DNA"/>
</dbReference>
<dbReference type="EMBL" id="U23491">
    <property type="protein sequence ID" value="AAA65148.1"/>
    <property type="molecule type" value="Genomic_DNA"/>
</dbReference>
<dbReference type="EMBL" id="U23492">
    <property type="protein sequence ID" value="AAA65154.1"/>
    <property type="molecule type" value="Genomic_DNA"/>
</dbReference>
<dbReference type="EMBL" id="U00096">
    <property type="protein sequence ID" value="AAC74340.1"/>
    <property type="molecule type" value="Genomic_DNA"/>
</dbReference>
<dbReference type="EMBL" id="AP009048">
    <property type="protein sequence ID" value="BAA14790.1"/>
    <property type="molecule type" value="Genomic_DNA"/>
</dbReference>
<dbReference type="EMBL" id="AF062842">
    <property type="protein sequence ID" value="AAC16348.1"/>
    <property type="molecule type" value="Genomic_DNA"/>
</dbReference>
<dbReference type="PIR" id="S07795">
    <property type="entry name" value="S07795"/>
</dbReference>
<dbReference type="RefSeq" id="NP_415774.1">
    <property type="nucleotide sequence ID" value="NC_000913.3"/>
</dbReference>
<dbReference type="RefSeq" id="WP_001056490.1">
    <property type="nucleotide sequence ID" value="NZ_SSZK01000031.1"/>
</dbReference>
<dbReference type="PDB" id="2GS4">
    <property type="method" value="X-ray"/>
    <property type="resolution" value="2.00 A"/>
    <property type="chains" value="A/B=1-166"/>
</dbReference>
<dbReference type="PDBsum" id="2GS4"/>
<dbReference type="SMR" id="P21362"/>
<dbReference type="BioGRID" id="4260654">
    <property type="interactions" value="23"/>
</dbReference>
<dbReference type="BioGRID" id="851467">
    <property type="interactions" value="2"/>
</dbReference>
<dbReference type="DIP" id="DIP-11580N"/>
<dbReference type="FunCoup" id="P21362">
    <property type="interactions" value="13"/>
</dbReference>
<dbReference type="IntAct" id="P21362">
    <property type="interactions" value="6"/>
</dbReference>
<dbReference type="STRING" id="511145.b1258"/>
<dbReference type="jPOST" id="P21362"/>
<dbReference type="PaxDb" id="511145-b1258"/>
<dbReference type="EnsemblBacteria" id="AAC74340">
    <property type="protein sequence ID" value="AAC74340"/>
    <property type="gene ID" value="b1258"/>
</dbReference>
<dbReference type="GeneID" id="947133"/>
<dbReference type="KEGG" id="ecj:JW1250"/>
<dbReference type="KEGG" id="eco:b1258"/>
<dbReference type="KEGG" id="ecoc:C3026_07385"/>
<dbReference type="PATRIC" id="fig|1411691.4.peg.1025"/>
<dbReference type="EchoBASE" id="EB1116"/>
<dbReference type="eggNOG" id="COG3685">
    <property type="taxonomic scope" value="Bacteria"/>
</dbReference>
<dbReference type="HOGENOM" id="CLU_102561_0_0_6"/>
<dbReference type="InParanoid" id="P21362"/>
<dbReference type="OMA" id="AKTCEAM"/>
<dbReference type="OrthoDB" id="9795056at2"/>
<dbReference type="PhylomeDB" id="P21362"/>
<dbReference type="BioCyc" id="EcoCyc:EG11126-MONOMER"/>
<dbReference type="EvolutionaryTrace" id="P21362"/>
<dbReference type="PRO" id="PR:P21362"/>
<dbReference type="Proteomes" id="UP000000625">
    <property type="component" value="Chromosome"/>
</dbReference>
<dbReference type="GO" id="GO:0042803">
    <property type="term" value="F:protein homodimerization activity"/>
    <property type="evidence" value="ECO:0000314"/>
    <property type="project" value="EcoCyc"/>
</dbReference>
<dbReference type="GO" id="GO:0006974">
    <property type="term" value="P:DNA damage response"/>
    <property type="evidence" value="ECO:0000270"/>
    <property type="project" value="EcoliWiki"/>
</dbReference>
<dbReference type="CDD" id="cd07909">
    <property type="entry name" value="YciF"/>
    <property type="match status" value="1"/>
</dbReference>
<dbReference type="FunFam" id="1.20.1260.10:FF:000008">
    <property type="entry name" value="YciF protein"/>
    <property type="match status" value="1"/>
</dbReference>
<dbReference type="Gene3D" id="1.20.1260.10">
    <property type="match status" value="1"/>
</dbReference>
<dbReference type="InterPro" id="IPR010287">
    <property type="entry name" value="DUF892_YciF-like"/>
</dbReference>
<dbReference type="InterPro" id="IPR012347">
    <property type="entry name" value="Ferritin-like"/>
</dbReference>
<dbReference type="InterPro" id="IPR009078">
    <property type="entry name" value="Ferritin-like_SF"/>
</dbReference>
<dbReference type="InterPro" id="IPR047114">
    <property type="entry name" value="YciF"/>
</dbReference>
<dbReference type="PANTHER" id="PTHR30565">
    <property type="entry name" value="PROTEIN YCIF"/>
    <property type="match status" value="1"/>
</dbReference>
<dbReference type="PANTHER" id="PTHR30565:SF9">
    <property type="entry name" value="PROTEIN YCIF"/>
    <property type="match status" value="1"/>
</dbReference>
<dbReference type="Pfam" id="PF05974">
    <property type="entry name" value="DUF892"/>
    <property type="match status" value="1"/>
</dbReference>
<dbReference type="SUPFAM" id="SSF47240">
    <property type="entry name" value="Ferritin-like"/>
    <property type="match status" value="1"/>
</dbReference>
<proteinExistence type="evidence at protein level"/>
<organism>
    <name type="scientific">Escherichia coli (strain K12)</name>
    <dbReference type="NCBI Taxonomy" id="83333"/>
    <lineage>
        <taxon>Bacteria</taxon>
        <taxon>Pseudomonadati</taxon>
        <taxon>Pseudomonadota</taxon>
        <taxon>Gammaproteobacteria</taxon>
        <taxon>Enterobacterales</taxon>
        <taxon>Enterobacteriaceae</taxon>
        <taxon>Escherichia</taxon>
    </lineage>
</organism>
<accession>P21362</accession>
<protein>
    <recommendedName>
        <fullName>Protein YciF</fullName>
    </recommendedName>
</protein>
<keyword id="KW-0002">3D-structure</keyword>
<keyword id="KW-0903">Direct protein sequencing</keyword>
<keyword id="KW-1185">Reference proteome</keyword>
<feature type="chain" id="PRO_0000168874" description="Protein YciF">
    <location>
        <begin position="1"/>
        <end position="166"/>
    </location>
</feature>
<feature type="helix" evidence="2">
    <location>
        <begin position="6"/>
        <end position="33"/>
    </location>
</feature>
<feature type="helix" evidence="2">
    <location>
        <begin position="38"/>
        <end position="63"/>
    </location>
</feature>
<feature type="helix" evidence="2">
    <location>
        <begin position="76"/>
        <end position="89"/>
    </location>
</feature>
<feature type="helix" evidence="2">
    <location>
        <begin position="95"/>
        <end position="126"/>
    </location>
</feature>
<feature type="helix" evidence="2">
    <location>
        <begin position="130"/>
        <end position="159"/>
    </location>
</feature>
<evidence type="ECO:0000269" key="1">
    <source>
    </source>
</evidence>
<evidence type="ECO:0007829" key="2">
    <source>
        <dbReference type="PDB" id="2GS4"/>
    </source>
</evidence>
<sequence length="166" mass="18597">MNMKTIEDVFIHLLSDTYSAEKQLTRALAKLARATSNEKLSQAFHAHLEETHGQIERIDQVVESESNLKIKRMKCVAMEGLIEEANEVIESTEKNEVRDAALIAAAQKVEHYEIASYGTLATLAEQLGYRKAAKLLKETLEEEKATDIKLTDLAINNVNKKAENKA</sequence>
<name>YCIF_ECOLI</name>
<reference key="1">
    <citation type="journal article" date="1988" name="Genetics">
        <title>Molecular evolution of the Escherichia coli chromosome. I. Analysis of structure and natural variation in a previously uncharacterized region between trp and tonB.</title>
        <authorList>
            <person name="Stoltzfus A."/>
            <person name="Leslie J.F."/>
            <person name="Milkman R."/>
        </authorList>
    </citation>
    <scope>NUCLEOTIDE SEQUENCE [GENOMIC DNA]</scope>
    <source>
        <strain>K12</strain>
    </source>
</reference>
<reference key="2">
    <citation type="submission" date="1995-03" db="EMBL/GenBank/DDBJ databases">
        <authorList>
            <person name="Milkman R."/>
        </authorList>
    </citation>
    <scope>NUCLEOTIDE SEQUENCE [GENOMIC DNA]</scope>
    <source>
        <strain>K12</strain>
        <strain>Various ECOR strains</strain>
    </source>
</reference>
<reference key="3">
    <citation type="journal article" date="1996" name="DNA Res.">
        <title>A 570-kb DNA sequence of the Escherichia coli K-12 genome corresponding to the 28.0-40.1 min region on the linkage map.</title>
        <authorList>
            <person name="Aiba H."/>
            <person name="Baba T."/>
            <person name="Fujita K."/>
            <person name="Hayashi K."/>
            <person name="Inada T."/>
            <person name="Isono K."/>
            <person name="Itoh T."/>
            <person name="Kasai H."/>
            <person name="Kashimoto K."/>
            <person name="Kimura S."/>
            <person name="Kitakawa M."/>
            <person name="Kitagawa M."/>
            <person name="Makino K."/>
            <person name="Miki T."/>
            <person name="Mizobuchi K."/>
            <person name="Mori H."/>
            <person name="Mori T."/>
            <person name="Motomura K."/>
            <person name="Nakade S."/>
            <person name="Nakamura Y."/>
            <person name="Nashimoto H."/>
            <person name="Nishio Y."/>
            <person name="Oshima T."/>
            <person name="Saito N."/>
            <person name="Sampei G."/>
            <person name="Seki Y."/>
            <person name="Sivasundaram S."/>
            <person name="Tagami H."/>
            <person name="Takeda J."/>
            <person name="Takemoto K."/>
            <person name="Takeuchi Y."/>
            <person name="Wada C."/>
            <person name="Yamamoto Y."/>
            <person name="Horiuchi T."/>
        </authorList>
    </citation>
    <scope>NUCLEOTIDE SEQUENCE [LARGE SCALE GENOMIC DNA]</scope>
    <source>
        <strain>K12 / W3110 / ATCC 27325 / DSM 5911</strain>
    </source>
</reference>
<reference key="4">
    <citation type="journal article" date="1997" name="Science">
        <title>The complete genome sequence of Escherichia coli K-12.</title>
        <authorList>
            <person name="Blattner F.R."/>
            <person name="Plunkett G. III"/>
            <person name="Bloch C.A."/>
            <person name="Perna N.T."/>
            <person name="Burland V."/>
            <person name="Riley M."/>
            <person name="Collado-Vides J."/>
            <person name="Glasner J.D."/>
            <person name="Rode C.K."/>
            <person name="Mayhew G.F."/>
            <person name="Gregor J."/>
            <person name="Davis N.W."/>
            <person name="Kirkpatrick H.A."/>
            <person name="Goeden M.A."/>
            <person name="Rose D.J."/>
            <person name="Mau B."/>
            <person name="Shao Y."/>
        </authorList>
    </citation>
    <scope>NUCLEOTIDE SEQUENCE [LARGE SCALE GENOMIC DNA]</scope>
    <source>
        <strain>K12 / MG1655 / ATCC 47076</strain>
    </source>
</reference>
<reference key="5">
    <citation type="journal article" date="2006" name="Mol. Syst. Biol.">
        <title>Highly accurate genome sequences of Escherichia coli K-12 strains MG1655 and W3110.</title>
        <authorList>
            <person name="Hayashi K."/>
            <person name="Morooka N."/>
            <person name="Yamamoto Y."/>
            <person name="Fujita K."/>
            <person name="Isono K."/>
            <person name="Choi S."/>
            <person name="Ohtsubo E."/>
            <person name="Baba T."/>
            <person name="Wanner B.L."/>
            <person name="Mori H."/>
            <person name="Horiuchi T."/>
        </authorList>
    </citation>
    <scope>NUCLEOTIDE SEQUENCE [LARGE SCALE GENOMIC DNA]</scope>
    <source>
        <strain>K12 / W3110 / ATCC 27325 / DSM 5911</strain>
    </source>
</reference>
<reference key="6">
    <citation type="journal article" date="1993" name="Mol. Gen. Genet.">
        <title>Function of the Escherichia coli nucleoid protein, H-NS: molecular analysis of a subset of proteins whose expression is enhanced in a hns deletion mutant.</title>
        <authorList>
            <person name="Yoshida T."/>
            <person name="Ueguchi C."/>
            <person name="Yamada H."/>
            <person name="Mizuno T."/>
        </authorList>
    </citation>
    <scope>PROTEIN SEQUENCE OF 1-20</scope>
    <source>
        <strain>K12</strain>
    </source>
</reference>
<reference key="7">
    <citation type="submission" date="1998-05" db="EMBL/GenBank/DDBJ databases">
        <authorList>
            <person name="Pinou T."/>
            <person name="Riley M.A."/>
        </authorList>
    </citation>
    <scope>NUCLEOTIDE SEQUENCE [GENOMIC DNA] OF 61-148</scope>
    <source>
        <strain>976-L14</strain>
    </source>
</reference>
<reference key="8">
    <citation type="journal article" date="2006" name="Protein Sci.">
        <title>The crystal structure of the E. coli stress protein yciF.</title>
        <authorList>
            <person name="Hindupur A."/>
            <person name="Liu D."/>
            <person name="Zhao Y."/>
            <person name="Bellamy H.D."/>
            <person name="White M.A."/>
            <person name="Fox R.O."/>
        </authorList>
    </citation>
    <scope>X-RAY CRYSTALLOGRAPHY (2.0 ANGSTROMS)</scope>
    <scope>SUBUNIT</scope>
</reference>
<comment type="subunit">
    <text evidence="1">Homodimer.</text>
</comment>